<keyword id="KW-0963">Cytoplasm</keyword>
<keyword id="KW-0472">Membrane</keyword>
<keyword id="KW-1185">Reference proteome</keyword>
<keyword id="KW-0762">Sugar transport</keyword>
<keyword id="KW-0812">Transmembrane</keyword>
<keyword id="KW-1133">Transmembrane helix</keyword>
<keyword id="KW-0813">Transport</keyword>
<feature type="chain" id="PRO_0000270192" description="Solute carrier family 2, facilitated glucose transporter member 10">
    <location>
        <begin position="1"/>
        <end position="536"/>
    </location>
</feature>
<feature type="topological domain" description="Cytoplasmic" evidence="3">
    <location>
        <begin position="1"/>
        <end position="15"/>
    </location>
</feature>
<feature type="transmembrane region" description="Helical; Name=1" evidence="3">
    <location>
        <begin position="16"/>
        <end position="36"/>
    </location>
</feature>
<feature type="topological domain" description="Extracellular" evidence="3">
    <location>
        <begin position="37"/>
        <end position="48"/>
    </location>
</feature>
<feature type="transmembrane region" description="Helical; Name=2" evidence="3">
    <location>
        <begin position="49"/>
        <end position="69"/>
    </location>
</feature>
<feature type="topological domain" description="Cytoplasmic" evidence="3">
    <location>
        <begin position="70"/>
        <end position="82"/>
    </location>
</feature>
<feature type="transmembrane region" description="Helical; Name=3" evidence="3">
    <location>
        <begin position="83"/>
        <end position="103"/>
    </location>
</feature>
<feature type="topological domain" description="Extracellular" evidence="3">
    <location>
        <begin position="104"/>
        <end position="107"/>
    </location>
</feature>
<feature type="transmembrane region" description="Helical; Name=4" evidence="3">
    <location>
        <begin position="108"/>
        <end position="128"/>
    </location>
</feature>
<feature type="topological domain" description="Cytoplasmic" evidence="3">
    <location>
        <begin position="129"/>
        <end position="132"/>
    </location>
</feature>
<feature type="transmembrane region" description="Helical; Name=5" evidence="3">
    <location>
        <begin position="133"/>
        <end position="153"/>
    </location>
</feature>
<feature type="topological domain" description="Extracellular" evidence="3">
    <location>
        <begin position="154"/>
        <end position="166"/>
    </location>
</feature>
<feature type="transmembrane region" description="Helical; Name=6" evidence="3">
    <location>
        <begin position="167"/>
        <end position="187"/>
    </location>
</feature>
<feature type="topological domain" description="Cytoplasmic" evidence="3">
    <location>
        <begin position="188"/>
        <end position="232"/>
    </location>
</feature>
<feature type="transmembrane region" description="Helical; Name=7" evidence="3">
    <location>
        <begin position="233"/>
        <end position="253"/>
    </location>
</feature>
<feature type="topological domain" description="Extracellular" evidence="3">
    <location>
        <begin position="254"/>
        <end position="269"/>
    </location>
</feature>
<feature type="transmembrane region" description="Helical; Name=8" evidence="3">
    <location>
        <begin position="270"/>
        <end position="290"/>
    </location>
</feature>
<feature type="topological domain" description="Cytoplasmic" evidence="3">
    <location>
        <begin position="291"/>
        <end position="298"/>
    </location>
</feature>
<feature type="transmembrane region" description="Helical; Name=9" evidence="3">
    <location>
        <begin position="299"/>
        <end position="319"/>
    </location>
</feature>
<feature type="topological domain" description="Extracellular" evidence="3">
    <location>
        <begin position="320"/>
        <end position="402"/>
    </location>
</feature>
<feature type="transmembrane region" description="Helical; Name=10" evidence="3">
    <location>
        <begin position="403"/>
        <end position="423"/>
    </location>
</feature>
<feature type="topological domain" description="Cytoplasmic" evidence="3">
    <location>
        <begin position="424"/>
        <end position="442"/>
    </location>
</feature>
<feature type="transmembrane region" description="Helical; Name=11" evidence="3">
    <location>
        <begin position="443"/>
        <end position="463"/>
    </location>
</feature>
<feature type="topological domain" description="Extracellular" evidence="3">
    <location>
        <begin position="464"/>
        <end position="468"/>
    </location>
</feature>
<feature type="transmembrane region" description="Helical; Name=12" evidence="3">
    <location>
        <begin position="469"/>
        <end position="489"/>
    </location>
</feature>
<feature type="topological domain" description="Cytoplasmic" evidence="3">
    <location>
        <begin position="490"/>
        <end position="536"/>
    </location>
</feature>
<feature type="binding site" evidence="2">
    <location>
        <begin position="242"/>
        <end position="243"/>
    </location>
    <ligand>
        <name>D-glucose</name>
        <dbReference type="ChEBI" id="CHEBI:4167"/>
    </ligand>
</feature>
<feature type="binding site" evidence="2">
    <location>
        <position position="428"/>
    </location>
    <ligand>
        <name>D-glucose</name>
        <dbReference type="ChEBI" id="CHEBI:4167"/>
    </ligand>
</feature>
<protein>
    <recommendedName>
        <fullName evidence="5">Solute carrier family 2, facilitated glucose transporter member 10</fullName>
    </recommendedName>
    <alternativeName>
        <fullName evidence="4">Glucose transporter type 10</fullName>
        <shortName evidence="4">GLUT-10</shortName>
    </alternativeName>
</protein>
<reference key="1">
    <citation type="journal article" date="2001" name="Mol. Genet. Metab.">
        <title>Sequence and functional analysis of GLUT10: a glucose transporter in the Type 2 diabetes-linked region of chromosome 20q12-13.1.</title>
        <authorList>
            <person name="Dawson P.A."/>
            <person name="Mychaleckyj J.C."/>
            <person name="Fossey S.C."/>
            <person name="Mihic S.J."/>
            <person name="Craddock A.L."/>
            <person name="Bowden D.W."/>
        </authorList>
    </citation>
    <scope>NUCLEOTIDE SEQUENCE [MRNA]</scope>
    <source>
        <strain>BALB/cJ</strain>
        <tissue>Brain</tissue>
    </source>
</reference>
<reference key="2">
    <citation type="journal article" date="2005" name="Science">
        <title>The transcriptional landscape of the mammalian genome.</title>
        <authorList>
            <person name="Carninci P."/>
            <person name="Kasukawa T."/>
            <person name="Katayama S."/>
            <person name="Gough J."/>
            <person name="Frith M.C."/>
            <person name="Maeda N."/>
            <person name="Oyama R."/>
            <person name="Ravasi T."/>
            <person name="Lenhard B."/>
            <person name="Wells C."/>
            <person name="Kodzius R."/>
            <person name="Shimokawa K."/>
            <person name="Bajic V.B."/>
            <person name="Brenner S.E."/>
            <person name="Batalov S."/>
            <person name="Forrest A.R."/>
            <person name="Zavolan M."/>
            <person name="Davis M.J."/>
            <person name="Wilming L.G."/>
            <person name="Aidinis V."/>
            <person name="Allen J.E."/>
            <person name="Ambesi-Impiombato A."/>
            <person name="Apweiler R."/>
            <person name="Aturaliya R.N."/>
            <person name="Bailey T.L."/>
            <person name="Bansal M."/>
            <person name="Baxter L."/>
            <person name="Beisel K.W."/>
            <person name="Bersano T."/>
            <person name="Bono H."/>
            <person name="Chalk A.M."/>
            <person name="Chiu K.P."/>
            <person name="Choudhary V."/>
            <person name="Christoffels A."/>
            <person name="Clutterbuck D.R."/>
            <person name="Crowe M.L."/>
            <person name="Dalla E."/>
            <person name="Dalrymple B.P."/>
            <person name="de Bono B."/>
            <person name="Della Gatta G."/>
            <person name="di Bernardo D."/>
            <person name="Down T."/>
            <person name="Engstrom P."/>
            <person name="Fagiolini M."/>
            <person name="Faulkner G."/>
            <person name="Fletcher C.F."/>
            <person name="Fukushima T."/>
            <person name="Furuno M."/>
            <person name="Futaki S."/>
            <person name="Gariboldi M."/>
            <person name="Georgii-Hemming P."/>
            <person name="Gingeras T.R."/>
            <person name="Gojobori T."/>
            <person name="Green R.E."/>
            <person name="Gustincich S."/>
            <person name="Harbers M."/>
            <person name="Hayashi Y."/>
            <person name="Hensch T.K."/>
            <person name="Hirokawa N."/>
            <person name="Hill D."/>
            <person name="Huminiecki L."/>
            <person name="Iacono M."/>
            <person name="Ikeo K."/>
            <person name="Iwama A."/>
            <person name="Ishikawa T."/>
            <person name="Jakt M."/>
            <person name="Kanapin A."/>
            <person name="Katoh M."/>
            <person name="Kawasawa Y."/>
            <person name="Kelso J."/>
            <person name="Kitamura H."/>
            <person name="Kitano H."/>
            <person name="Kollias G."/>
            <person name="Krishnan S.P."/>
            <person name="Kruger A."/>
            <person name="Kummerfeld S.K."/>
            <person name="Kurochkin I.V."/>
            <person name="Lareau L.F."/>
            <person name="Lazarevic D."/>
            <person name="Lipovich L."/>
            <person name="Liu J."/>
            <person name="Liuni S."/>
            <person name="McWilliam S."/>
            <person name="Madan Babu M."/>
            <person name="Madera M."/>
            <person name="Marchionni L."/>
            <person name="Matsuda H."/>
            <person name="Matsuzawa S."/>
            <person name="Miki H."/>
            <person name="Mignone F."/>
            <person name="Miyake S."/>
            <person name="Morris K."/>
            <person name="Mottagui-Tabar S."/>
            <person name="Mulder N."/>
            <person name="Nakano N."/>
            <person name="Nakauchi H."/>
            <person name="Ng P."/>
            <person name="Nilsson R."/>
            <person name="Nishiguchi S."/>
            <person name="Nishikawa S."/>
            <person name="Nori F."/>
            <person name="Ohara O."/>
            <person name="Okazaki Y."/>
            <person name="Orlando V."/>
            <person name="Pang K.C."/>
            <person name="Pavan W.J."/>
            <person name="Pavesi G."/>
            <person name="Pesole G."/>
            <person name="Petrovsky N."/>
            <person name="Piazza S."/>
            <person name="Reed J."/>
            <person name="Reid J.F."/>
            <person name="Ring B.Z."/>
            <person name="Ringwald M."/>
            <person name="Rost B."/>
            <person name="Ruan Y."/>
            <person name="Salzberg S.L."/>
            <person name="Sandelin A."/>
            <person name="Schneider C."/>
            <person name="Schoenbach C."/>
            <person name="Sekiguchi K."/>
            <person name="Semple C.A."/>
            <person name="Seno S."/>
            <person name="Sessa L."/>
            <person name="Sheng Y."/>
            <person name="Shibata Y."/>
            <person name="Shimada H."/>
            <person name="Shimada K."/>
            <person name="Silva D."/>
            <person name="Sinclair B."/>
            <person name="Sperling S."/>
            <person name="Stupka E."/>
            <person name="Sugiura K."/>
            <person name="Sultana R."/>
            <person name="Takenaka Y."/>
            <person name="Taki K."/>
            <person name="Tammoja K."/>
            <person name="Tan S.L."/>
            <person name="Tang S."/>
            <person name="Taylor M.S."/>
            <person name="Tegner J."/>
            <person name="Teichmann S.A."/>
            <person name="Ueda H.R."/>
            <person name="van Nimwegen E."/>
            <person name="Verardo R."/>
            <person name="Wei C.L."/>
            <person name="Yagi K."/>
            <person name="Yamanishi H."/>
            <person name="Zabarovsky E."/>
            <person name="Zhu S."/>
            <person name="Zimmer A."/>
            <person name="Hide W."/>
            <person name="Bult C."/>
            <person name="Grimmond S.M."/>
            <person name="Teasdale R.D."/>
            <person name="Liu E.T."/>
            <person name="Brusic V."/>
            <person name="Quackenbush J."/>
            <person name="Wahlestedt C."/>
            <person name="Mattick J.S."/>
            <person name="Hume D.A."/>
            <person name="Kai C."/>
            <person name="Sasaki D."/>
            <person name="Tomaru Y."/>
            <person name="Fukuda S."/>
            <person name="Kanamori-Katayama M."/>
            <person name="Suzuki M."/>
            <person name="Aoki J."/>
            <person name="Arakawa T."/>
            <person name="Iida J."/>
            <person name="Imamura K."/>
            <person name="Itoh M."/>
            <person name="Kato T."/>
            <person name="Kawaji H."/>
            <person name="Kawagashira N."/>
            <person name="Kawashima T."/>
            <person name="Kojima M."/>
            <person name="Kondo S."/>
            <person name="Konno H."/>
            <person name="Nakano K."/>
            <person name="Ninomiya N."/>
            <person name="Nishio T."/>
            <person name="Okada M."/>
            <person name="Plessy C."/>
            <person name="Shibata K."/>
            <person name="Shiraki T."/>
            <person name="Suzuki S."/>
            <person name="Tagami M."/>
            <person name="Waki K."/>
            <person name="Watahiki A."/>
            <person name="Okamura-Oho Y."/>
            <person name="Suzuki H."/>
            <person name="Kawai J."/>
            <person name="Hayashizaki Y."/>
        </authorList>
    </citation>
    <scope>NUCLEOTIDE SEQUENCE [LARGE SCALE MRNA]</scope>
    <source>
        <strain>C57BL/6J</strain>
        <tissue>Heart</tissue>
    </source>
</reference>
<name>GTR10_MOUSE</name>
<proteinExistence type="evidence at transcript level"/>
<organism>
    <name type="scientific">Mus musculus</name>
    <name type="common">Mouse</name>
    <dbReference type="NCBI Taxonomy" id="10090"/>
    <lineage>
        <taxon>Eukaryota</taxon>
        <taxon>Metazoa</taxon>
        <taxon>Chordata</taxon>
        <taxon>Craniata</taxon>
        <taxon>Vertebrata</taxon>
        <taxon>Euteleostomi</taxon>
        <taxon>Mammalia</taxon>
        <taxon>Eutheria</taxon>
        <taxon>Euarchontoglires</taxon>
        <taxon>Glires</taxon>
        <taxon>Rodentia</taxon>
        <taxon>Myomorpha</taxon>
        <taxon>Muroidea</taxon>
        <taxon>Muridae</taxon>
        <taxon>Murinae</taxon>
        <taxon>Mus</taxon>
        <taxon>Mus</taxon>
    </lineage>
</organism>
<evidence type="ECO:0000250" key="1">
    <source>
        <dbReference type="UniProtKB" id="O95528"/>
    </source>
</evidence>
<evidence type="ECO:0000250" key="2">
    <source>
        <dbReference type="UniProtKB" id="P11169"/>
    </source>
</evidence>
<evidence type="ECO:0000255" key="3"/>
<evidence type="ECO:0000303" key="4">
    <source>
    </source>
</evidence>
<evidence type="ECO:0000305" key="5"/>
<evidence type="ECO:0000312" key="6">
    <source>
        <dbReference type="MGI" id="MGI:2156687"/>
    </source>
</evidence>
<sequence>MGLRPAVLLLCASVSLLGGLTFGYELAVISGALLPLQLNFGLSCLEQELLVGSLLLGALLASLVGGFLIDCYGRRRAILGSNAVLLAGSLILGLASSLPWLLLGRLSVGFAISLSSMACCIYVSELVGPRQRGVLVSLYEVGITVGILFSYGLNYVLAGSPWGWRHMFGWAAAPALLQSLSLFLLPAGAEGTAAPKDLIPLQGRETSKPGLVKPQYSFLDLFRAQDGMWSRTVVGLGLVLFQQLTGQPNVLYYASTIFRSVGFHGGSSAVLASVGLGTVKVAATLVATGLVDRAGRRVLLLFGCALMALSVSGIGLVSFAVSLDSGPSCLATSNASQQVDLPGSSGLLVRSSLPPVLHTNGDQGQLVLSVTERPIHPVITASLGPVLNTASPVPTSPILEHTLLCWSALVCMMVYVSAFSVGFGPVTWLVLSEIYPAEIRGRAFAFCSSFNWAANLFISLSFLDLIGAIGLAWTFLLYGLTAVLGLAFIYLLVPETKGQSLAEIEQQFQTSRFPLNFGHRQRIGIQYHRLDVSSAS</sequence>
<comment type="function">
    <text evidence="1">Facilitative glucose transporter required for the development of the cardiovascular system.</text>
</comment>
<comment type="catalytic activity">
    <reaction evidence="1">
        <text>D-glucose(out) = D-glucose(in)</text>
        <dbReference type="Rhea" id="RHEA:60376"/>
        <dbReference type="ChEBI" id="CHEBI:4167"/>
    </reaction>
</comment>
<comment type="subcellular location">
    <subcellularLocation>
        <location evidence="1">Endomembrane system</location>
        <topology evidence="3">Multi-pass membrane protein</topology>
    </subcellularLocation>
    <subcellularLocation>
        <location evidence="1">Cytoplasm</location>
        <location evidence="1">Perinuclear region</location>
    </subcellularLocation>
</comment>
<comment type="similarity">
    <text evidence="5">Belongs to the major facilitator superfamily. Sugar transporter (TC 2.A.1.1) family. Glucose transporter subfamily.</text>
</comment>
<dbReference type="EMBL" id="AY029579">
    <property type="protein sequence ID" value="AAK38739.1"/>
    <property type="molecule type" value="mRNA"/>
</dbReference>
<dbReference type="EMBL" id="AK052156">
    <property type="protein sequence ID" value="BAC34861.1"/>
    <property type="molecule type" value="mRNA"/>
</dbReference>
<dbReference type="CCDS" id="CCDS17083.1"/>
<dbReference type="RefSeq" id="NP_569718.1">
    <property type="nucleotide sequence ID" value="NM_130451.3"/>
</dbReference>
<dbReference type="SMR" id="Q8VHD6"/>
<dbReference type="FunCoup" id="Q8VHD6">
    <property type="interactions" value="18"/>
</dbReference>
<dbReference type="STRING" id="10090.ENSMUSP00000029196"/>
<dbReference type="PhosphoSitePlus" id="Q8VHD6"/>
<dbReference type="PaxDb" id="10090-ENSMUSP00000029196"/>
<dbReference type="ProteomicsDB" id="270904"/>
<dbReference type="Antibodypedia" id="13253">
    <property type="antibodies" value="163 antibodies from 28 providers"/>
</dbReference>
<dbReference type="DNASU" id="170441"/>
<dbReference type="Ensembl" id="ENSMUST00000029196.5">
    <property type="protein sequence ID" value="ENSMUSP00000029196.5"/>
    <property type="gene ID" value="ENSMUSG00000027661.5"/>
</dbReference>
<dbReference type="GeneID" id="170441"/>
<dbReference type="KEGG" id="mmu:170441"/>
<dbReference type="UCSC" id="uc008nxv.2">
    <property type="organism name" value="mouse"/>
</dbReference>
<dbReference type="AGR" id="MGI:2156687"/>
<dbReference type="CTD" id="81031"/>
<dbReference type="MGI" id="MGI:2156687">
    <property type="gene designation" value="Slc2a10"/>
</dbReference>
<dbReference type="VEuPathDB" id="HostDB:ENSMUSG00000027661"/>
<dbReference type="eggNOG" id="KOG0254">
    <property type="taxonomic scope" value="Eukaryota"/>
</dbReference>
<dbReference type="GeneTree" id="ENSGT00940000159430"/>
<dbReference type="HOGENOM" id="CLU_001265_30_5_1"/>
<dbReference type="InParanoid" id="Q8VHD6"/>
<dbReference type="OMA" id="GCYRIPV"/>
<dbReference type="OrthoDB" id="4142200at2759"/>
<dbReference type="PhylomeDB" id="Q8VHD6"/>
<dbReference type="TreeFam" id="TF332408"/>
<dbReference type="Reactome" id="R-MMU-189200">
    <property type="pathway name" value="Cellular hexose transport"/>
</dbReference>
<dbReference type="BioGRID-ORCS" id="170441">
    <property type="hits" value="3 hits in 75 CRISPR screens"/>
</dbReference>
<dbReference type="ChiTaRS" id="Slc2a10">
    <property type="organism name" value="mouse"/>
</dbReference>
<dbReference type="PRO" id="PR:Q8VHD6"/>
<dbReference type="Proteomes" id="UP000000589">
    <property type="component" value="Chromosome 2"/>
</dbReference>
<dbReference type="RNAct" id="Q8VHD6">
    <property type="molecule type" value="protein"/>
</dbReference>
<dbReference type="Bgee" id="ENSMUSG00000027661">
    <property type="expression patterns" value="Expressed in humerus cartilage element and 154 other cell types or tissues"/>
</dbReference>
<dbReference type="ExpressionAtlas" id="Q8VHD6">
    <property type="expression patterns" value="baseline and differential"/>
</dbReference>
<dbReference type="GO" id="GO:0005829">
    <property type="term" value="C:cytosol"/>
    <property type="evidence" value="ECO:0007669"/>
    <property type="project" value="Ensembl"/>
</dbReference>
<dbReference type="GO" id="GO:0012505">
    <property type="term" value="C:endomembrane system"/>
    <property type="evidence" value="ECO:0007669"/>
    <property type="project" value="UniProtKB-SubCell"/>
</dbReference>
<dbReference type="GO" id="GO:0048471">
    <property type="term" value="C:perinuclear region of cytoplasm"/>
    <property type="evidence" value="ECO:0007669"/>
    <property type="project" value="UniProtKB-SubCell"/>
</dbReference>
<dbReference type="GO" id="GO:0005886">
    <property type="term" value="C:plasma membrane"/>
    <property type="evidence" value="ECO:0000304"/>
    <property type="project" value="MGI"/>
</dbReference>
<dbReference type="GO" id="GO:0055056">
    <property type="term" value="F:D-glucose transmembrane transporter activity"/>
    <property type="evidence" value="ECO:0000266"/>
    <property type="project" value="MGI"/>
</dbReference>
<dbReference type="GO" id="GO:0033300">
    <property type="term" value="F:dehydroascorbic acid transmembrane transporter activity"/>
    <property type="evidence" value="ECO:0007669"/>
    <property type="project" value="Ensembl"/>
</dbReference>
<dbReference type="GO" id="GO:0060840">
    <property type="term" value="P:artery development"/>
    <property type="evidence" value="ECO:0007669"/>
    <property type="project" value="Ensembl"/>
</dbReference>
<dbReference type="GO" id="GO:0045454">
    <property type="term" value="P:cell redox homeostasis"/>
    <property type="evidence" value="ECO:0007669"/>
    <property type="project" value="Ensembl"/>
</dbReference>
<dbReference type="GO" id="GO:0098708">
    <property type="term" value="P:D-glucose import across plasma membrane"/>
    <property type="evidence" value="ECO:0007669"/>
    <property type="project" value="Ensembl"/>
</dbReference>
<dbReference type="GO" id="GO:1904659">
    <property type="term" value="P:D-glucose transmembrane transport"/>
    <property type="evidence" value="ECO:0000266"/>
    <property type="project" value="MGI"/>
</dbReference>
<dbReference type="GO" id="GO:0072498">
    <property type="term" value="P:embryonic skeletal joint development"/>
    <property type="evidence" value="ECO:0007669"/>
    <property type="project" value="Ensembl"/>
</dbReference>
<dbReference type="GO" id="GO:0032683">
    <property type="term" value="P:negative regulation of connective tissue growth factor production"/>
    <property type="evidence" value="ECO:0007669"/>
    <property type="project" value="Ensembl"/>
</dbReference>
<dbReference type="GO" id="GO:2001045">
    <property type="term" value="P:negative regulation of integrin-mediated signaling pathway"/>
    <property type="evidence" value="ECO:0007669"/>
    <property type="project" value="Ensembl"/>
</dbReference>
<dbReference type="GO" id="GO:1902729">
    <property type="term" value="P:negative regulation of proteoglycan biosynthetic process"/>
    <property type="evidence" value="ECO:0007669"/>
    <property type="project" value="Ensembl"/>
</dbReference>
<dbReference type="GO" id="GO:0030512">
    <property type="term" value="P:negative regulation of transforming growth factor beta receptor signaling pathway"/>
    <property type="evidence" value="ECO:0007669"/>
    <property type="project" value="Ensembl"/>
</dbReference>
<dbReference type="GO" id="GO:0010628">
    <property type="term" value="P:positive regulation of gene expression"/>
    <property type="evidence" value="ECO:0007669"/>
    <property type="project" value="Ensembl"/>
</dbReference>
<dbReference type="GO" id="GO:1902730">
    <property type="term" value="P:positive regulation of proteoglycan biosynthetic process"/>
    <property type="evidence" value="ECO:0007669"/>
    <property type="project" value="Ensembl"/>
</dbReference>
<dbReference type="GO" id="GO:0030511">
    <property type="term" value="P:positive regulation of transforming growth factor beta receptor signaling pathway"/>
    <property type="evidence" value="ECO:0007669"/>
    <property type="project" value="Ensembl"/>
</dbReference>
<dbReference type="GO" id="GO:1903053">
    <property type="term" value="P:regulation of extracellular matrix organization"/>
    <property type="evidence" value="ECO:0007669"/>
    <property type="project" value="Ensembl"/>
</dbReference>
<dbReference type="GO" id="GO:0043588">
    <property type="term" value="P:skin development"/>
    <property type="evidence" value="ECO:0007669"/>
    <property type="project" value="Ensembl"/>
</dbReference>
<dbReference type="FunFam" id="1.20.1250.20:FF:000234">
    <property type="entry name" value="Solute carrier family 2 member 10"/>
    <property type="match status" value="1"/>
</dbReference>
<dbReference type="FunFam" id="1.20.1250.20:FF:000164">
    <property type="entry name" value="solute carrier family 2, facilitated glucose transporter member 10"/>
    <property type="match status" value="1"/>
</dbReference>
<dbReference type="FunFam" id="1.20.1250.20:FF:000208">
    <property type="entry name" value="solute carrier family 2, facilitated glucose transporter member 10"/>
    <property type="match status" value="1"/>
</dbReference>
<dbReference type="Gene3D" id="1.20.1250.20">
    <property type="entry name" value="MFS general substrate transporter like domains"/>
    <property type="match status" value="3"/>
</dbReference>
<dbReference type="InterPro" id="IPR020846">
    <property type="entry name" value="MFS_dom"/>
</dbReference>
<dbReference type="InterPro" id="IPR005828">
    <property type="entry name" value="MFS_sugar_transport-like"/>
</dbReference>
<dbReference type="InterPro" id="IPR050820">
    <property type="entry name" value="MFS_Sugar_Transporter"/>
</dbReference>
<dbReference type="InterPro" id="IPR036259">
    <property type="entry name" value="MFS_trans_sf"/>
</dbReference>
<dbReference type="InterPro" id="IPR003663">
    <property type="entry name" value="Sugar/inositol_transpt"/>
</dbReference>
<dbReference type="InterPro" id="IPR005829">
    <property type="entry name" value="Sugar_transporter_CS"/>
</dbReference>
<dbReference type="PANTHER" id="PTHR48023">
    <property type="entry name" value="D-XYLOSE-PROTON SYMPORTER-LIKE 2"/>
    <property type="match status" value="1"/>
</dbReference>
<dbReference type="PANTHER" id="PTHR48023:SF7">
    <property type="entry name" value="SOLUTE CARRIER FAMILY 2, FACILITATED GLUCOSE TRANSPORTER MEMBER 10"/>
    <property type="match status" value="1"/>
</dbReference>
<dbReference type="Pfam" id="PF00083">
    <property type="entry name" value="Sugar_tr"/>
    <property type="match status" value="2"/>
</dbReference>
<dbReference type="PRINTS" id="PR00171">
    <property type="entry name" value="SUGRTRNSPORT"/>
</dbReference>
<dbReference type="SUPFAM" id="SSF103473">
    <property type="entry name" value="MFS general substrate transporter"/>
    <property type="match status" value="1"/>
</dbReference>
<dbReference type="PROSITE" id="PS50850">
    <property type="entry name" value="MFS"/>
    <property type="match status" value="1"/>
</dbReference>
<dbReference type="PROSITE" id="PS00216">
    <property type="entry name" value="SUGAR_TRANSPORT_1"/>
    <property type="match status" value="1"/>
</dbReference>
<gene>
    <name evidence="6" type="primary">Slc2a10</name>
    <name evidence="4" type="synonym">Glut10</name>
</gene>
<accession>Q8VHD6</accession>